<organism>
    <name type="scientific">Arabidopsis thaliana</name>
    <name type="common">Mouse-ear cress</name>
    <dbReference type="NCBI Taxonomy" id="3702"/>
    <lineage>
        <taxon>Eukaryota</taxon>
        <taxon>Viridiplantae</taxon>
        <taxon>Streptophyta</taxon>
        <taxon>Embryophyta</taxon>
        <taxon>Tracheophyta</taxon>
        <taxon>Spermatophyta</taxon>
        <taxon>Magnoliopsida</taxon>
        <taxon>eudicotyledons</taxon>
        <taxon>Gunneridae</taxon>
        <taxon>Pentapetalae</taxon>
        <taxon>rosids</taxon>
        <taxon>malvids</taxon>
        <taxon>Brassicales</taxon>
        <taxon>Brassicaceae</taxon>
        <taxon>Camelineae</taxon>
        <taxon>Arabidopsis</taxon>
    </lineage>
</organism>
<accession>Q9FL89</accession>
<gene>
    <name type="ordered locus">At5g39180</name>
    <name type="ORF">K3K3.4</name>
    <name type="ORF">K3K3_30</name>
</gene>
<protein>
    <recommendedName>
        <fullName>Germin-like protein subfamily 1 member 19</fullName>
    </recommendedName>
</protein>
<sequence>MKVSMSLILITLSALVTIAKAYDPSPLQDFCVAIDDPKNGVFVNGKFCKDPKQAKAEDFFSSGLNQAGITNNKVQSNVTTVNVDQIPGLNTLGISLVRIDYAPYGQNPPHTHPRATEILVLVEGTLYVGFVSSNQDNNRLFAKVLNPGDVFVFPIGMIHFQVNIGKTPAVAFAGLSSQNAGVITIADIVFGSTPPINPDILAQAFQLDVNVVKDLEAKFKN</sequence>
<evidence type="ECO:0000250" key="1"/>
<evidence type="ECO:0000255" key="2"/>
<evidence type="ECO:0000305" key="3"/>
<dbReference type="EMBL" id="AB010694">
    <property type="protein sequence ID" value="BAB09372.1"/>
    <property type="molecule type" value="Genomic_DNA"/>
</dbReference>
<dbReference type="EMBL" id="CP002688">
    <property type="protein sequence ID" value="AED94404.1"/>
    <property type="molecule type" value="Genomic_DNA"/>
</dbReference>
<dbReference type="RefSeq" id="NP_198734.1">
    <property type="nucleotide sequence ID" value="NM_123280.3"/>
</dbReference>
<dbReference type="SMR" id="Q9FL89"/>
<dbReference type="FunCoup" id="Q9FL89">
    <property type="interactions" value="33"/>
</dbReference>
<dbReference type="STRING" id="3702.Q9FL89"/>
<dbReference type="GlyGen" id="Q9FL89">
    <property type="glycosylation" value="1 site"/>
</dbReference>
<dbReference type="PaxDb" id="3702-AT5G39180.1"/>
<dbReference type="EnsemblPlants" id="AT5G39180.1">
    <property type="protein sequence ID" value="AT5G39180.1"/>
    <property type="gene ID" value="AT5G39180"/>
</dbReference>
<dbReference type="GeneID" id="833912"/>
<dbReference type="Gramene" id="AT5G39180.1">
    <property type="protein sequence ID" value="AT5G39180.1"/>
    <property type="gene ID" value="AT5G39180"/>
</dbReference>
<dbReference type="KEGG" id="ath:AT5G39180"/>
<dbReference type="Araport" id="AT5G39180"/>
<dbReference type="TAIR" id="AT5G39180"/>
<dbReference type="eggNOG" id="ENOG502QQ4A">
    <property type="taxonomic scope" value="Eukaryota"/>
</dbReference>
<dbReference type="HOGENOM" id="CLU_015790_0_0_1"/>
<dbReference type="InParanoid" id="Q9FL89"/>
<dbReference type="OMA" id="THPCATE"/>
<dbReference type="PhylomeDB" id="Q9FL89"/>
<dbReference type="PRO" id="PR:Q9FL89"/>
<dbReference type="Proteomes" id="UP000006548">
    <property type="component" value="Chromosome 5"/>
</dbReference>
<dbReference type="GO" id="GO:0048046">
    <property type="term" value="C:apoplast"/>
    <property type="evidence" value="ECO:0007669"/>
    <property type="project" value="UniProtKB-SubCell"/>
</dbReference>
<dbReference type="GO" id="GO:0030145">
    <property type="term" value="F:manganese ion binding"/>
    <property type="evidence" value="ECO:0007669"/>
    <property type="project" value="InterPro"/>
</dbReference>
<dbReference type="CDD" id="cd02241">
    <property type="entry name" value="cupin_OxOx"/>
    <property type="match status" value="1"/>
</dbReference>
<dbReference type="FunFam" id="2.60.120.10:FF:000005">
    <property type="entry name" value="Germin-like protein subfamily 1 member 8"/>
    <property type="match status" value="1"/>
</dbReference>
<dbReference type="Gene3D" id="2.60.120.10">
    <property type="entry name" value="Jelly Rolls"/>
    <property type="match status" value="1"/>
</dbReference>
<dbReference type="InterPro" id="IPR006045">
    <property type="entry name" value="Cupin_1"/>
</dbReference>
<dbReference type="InterPro" id="IPR001929">
    <property type="entry name" value="Germin"/>
</dbReference>
<dbReference type="InterPro" id="IPR019780">
    <property type="entry name" value="Germin_Mn-BS"/>
</dbReference>
<dbReference type="InterPro" id="IPR014710">
    <property type="entry name" value="RmlC-like_jellyroll"/>
</dbReference>
<dbReference type="InterPro" id="IPR011051">
    <property type="entry name" value="RmlC_Cupin_sf"/>
</dbReference>
<dbReference type="PANTHER" id="PTHR31238">
    <property type="entry name" value="GERMIN-LIKE PROTEIN SUBFAMILY 3 MEMBER 3"/>
    <property type="match status" value="1"/>
</dbReference>
<dbReference type="Pfam" id="PF00190">
    <property type="entry name" value="Cupin_1"/>
    <property type="match status" value="1"/>
</dbReference>
<dbReference type="PRINTS" id="PR00325">
    <property type="entry name" value="GERMIN"/>
</dbReference>
<dbReference type="SMART" id="SM00835">
    <property type="entry name" value="Cupin_1"/>
    <property type="match status" value="1"/>
</dbReference>
<dbReference type="SUPFAM" id="SSF51182">
    <property type="entry name" value="RmlC-like cupins"/>
    <property type="match status" value="1"/>
</dbReference>
<dbReference type="PROSITE" id="PS00725">
    <property type="entry name" value="GERMIN"/>
    <property type="match status" value="1"/>
</dbReference>
<proteinExistence type="evidence at transcript level"/>
<name>GL119_ARATH</name>
<feature type="signal peptide" evidence="2">
    <location>
        <begin position="1"/>
        <end position="21"/>
    </location>
</feature>
<feature type="chain" id="PRO_0000010819" description="Germin-like protein subfamily 1 member 19">
    <location>
        <begin position="22"/>
        <end position="221"/>
    </location>
</feature>
<feature type="domain" description="Cupin type-1" evidence="2">
    <location>
        <begin position="76"/>
        <end position="213"/>
    </location>
</feature>
<feature type="binding site" evidence="1">
    <location>
        <position position="110"/>
    </location>
    <ligand>
        <name>Mn(2+)</name>
        <dbReference type="ChEBI" id="CHEBI:29035"/>
    </ligand>
</feature>
<feature type="binding site" evidence="1">
    <location>
        <position position="112"/>
    </location>
    <ligand>
        <name>Mn(2+)</name>
        <dbReference type="ChEBI" id="CHEBI:29035"/>
    </ligand>
</feature>
<feature type="binding site" evidence="1">
    <location>
        <position position="117"/>
    </location>
    <ligand>
        <name>Mn(2+)</name>
        <dbReference type="ChEBI" id="CHEBI:29035"/>
    </ligand>
</feature>
<feature type="binding site" evidence="1">
    <location>
        <position position="159"/>
    </location>
    <ligand>
        <name>Mn(2+)</name>
        <dbReference type="ChEBI" id="CHEBI:29035"/>
    </ligand>
</feature>
<feature type="glycosylation site" description="N-linked (GlcNAc...) asparagine" evidence="2">
    <location>
        <position position="77"/>
    </location>
</feature>
<feature type="disulfide bond" evidence="1">
    <location>
        <begin position="31"/>
        <end position="48"/>
    </location>
</feature>
<reference key="1">
    <citation type="journal article" date="1998" name="DNA Res.">
        <title>Structural analysis of Arabidopsis thaliana chromosome 5. V. Sequence features of the regions of 1,381,565 bp covered by twenty one physically assigned P1 and TAC clones.</title>
        <authorList>
            <person name="Kaneko T."/>
            <person name="Kotani H."/>
            <person name="Nakamura Y."/>
            <person name="Sato S."/>
            <person name="Asamizu E."/>
            <person name="Miyajima N."/>
            <person name="Tabata S."/>
        </authorList>
    </citation>
    <scope>NUCLEOTIDE SEQUENCE [LARGE SCALE GENOMIC DNA]</scope>
    <source>
        <strain>cv. Columbia</strain>
    </source>
</reference>
<reference key="2">
    <citation type="journal article" date="2017" name="Plant J.">
        <title>Araport11: a complete reannotation of the Arabidopsis thaliana reference genome.</title>
        <authorList>
            <person name="Cheng C.Y."/>
            <person name="Krishnakumar V."/>
            <person name="Chan A.P."/>
            <person name="Thibaud-Nissen F."/>
            <person name="Schobel S."/>
            <person name="Town C.D."/>
        </authorList>
    </citation>
    <scope>GENOME REANNOTATION</scope>
    <source>
        <strain>cv. Columbia</strain>
    </source>
</reference>
<comment type="function">
    <text>May play a role in plant defense. Probably has no oxalate oxidase activity even if the active site is conserved.</text>
</comment>
<comment type="subunit">
    <text evidence="1">Oligomer (believed to be a pentamer but probably hexamer).</text>
</comment>
<comment type="subcellular location">
    <subcellularLocation>
        <location evidence="1">Secreted</location>
        <location evidence="1">Extracellular space</location>
        <location evidence="1">Apoplast</location>
    </subcellularLocation>
</comment>
<comment type="similarity">
    <text evidence="3">Belongs to the germin family.</text>
</comment>
<keyword id="KW-0052">Apoplast</keyword>
<keyword id="KW-1015">Disulfide bond</keyword>
<keyword id="KW-0325">Glycoprotein</keyword>
<keyword id="KW-0464">Manganese</keyword>
<keyword id="KW-0479">Metal-binding</keyword>
<keyword id="KW-1185">Reference proteome</keyword>
<keyword id="KW-0964">Secreted</keyword>
<keyword id="KW-0732">Signal</keyword>